<feature type="chain" id="PRO_1000017641" description="Large ribosomal subunit protein bL27">
    <location>
        <begin position="1"/>
        <end position="85"/>
    </location>
</feature>
<feature type="region of interest" description="Disordered" evidence="2">
    <location>
        <begin position="1"/>
        <end position="22"/>
    </location>
</feature>
<keyword id="KW-1185">Reference proteome</keyword>
<keyword id="KW-0687">Ribonucleoprotein</keyword>
<keyword id="KW-0689">Ribosomal protein</keyword>
<accession>Q30QN9</accession>
<proteinExistence type="inferred from homology"/>
<reference key="1">
    <citation type="journal article" date="2008" name="Appl. Environ. Microbiol.">
        <title>Genome of the epsilonproteobacterial chemolithoautotroph Sulfurimonas denitrificans.</title>
        <authorList>
            <person name="Sievert S.M."/>
            <person name="Scott K.M."/>
            <person name="Klotz M.G."/>
            <person name="Chain P.S.G."/>
            <person name="Hauser L.J."/>
            <person name="Hemp J."/>
            <person name="Huegler M."/>
            <person name="Land M."/>
            <person name="Lapidus A."/>
            <person name="Larimer F.W."/>
            <person name="Lucas S."/>
            <person name="Malfatti S.A."/>
            <person name="Meyer F."/>
            <person name="Paulsen I.T."/>
            <person name="Ren Q."/>
            <person name="Simon J."/>
            <person name="Bailey K."/>
            <person name="Diaz E."/>
            <person name="Fitzpatrick K.A."/>
            <person name="Glover B."/>
            <person name="Gwatney N."/>
            <person name="Korajkic A."/>
            <person name="Long A."/>
            <person name="Mobberley J.M."/>
            <person name="Pantry S.N."/>
            <person name="Pazder G."/>
            <person name="Peterson S."/>
            <person name="Quintanilla J.D."/>
            <person name="Sprinkle R."/>
            <person name="Stephens J."/>
            <person name="Thomas P."/>
            <person name="Vaughn R."/>
            <person name="Weber M.J."/>
            <person name="Wooten L.L."/>
        </authorList>
    </citation>
    <scope>NUCLEOTIDE SEQUENCE [LARGE SCALE GENOMIC DNA]</scope>
    <source>
        <strain>ATCC 33889 / DSM 1251</strain>
    </source>
</reference>
<evidence type="ECO:0000255" key="1">
    <source>
        <dbReference type="HAMAP-Rule" id="MF_00539"/>
    </source>
</evidence>
<evidence type="ECO:0000256" key="2">
    <source>
        <dbReference type="SAM" id="MobiDB-lite"/>
    </source>
</evidence>
<evidence type="ECO:0000305" key="3"/>
<protein>
    <recommendedName>
        <fullName evidence="1">Large ribosomal subunit protein bL27</fullName>
    </recommendedName>
    <alternativeName>
        <fullName evidence="3">50S ribosomal protein L27</fullName>
    </alternativeName>
</protein>
<organism>
    <name type="scientific">Sulfurimonas denitrificans (strain ATCC 33889 / DSM 1251)</name>
    <name type="common">Thiomicrospira denitrificans (strain ATCC 33889 / DSM 1251)</name>
    <dbReference type="NCBI Taxonomy" id="326298"/>
    <lineage>
        <taxon>Bacteria</taxon>
        <taxon>Pseudomonadati</taxon>
        <taxon>Campylobacterota</taxon>
        <taxon>Epsilonproteobacteria</taxon>
        <taxon>Campylobacterales</taxon>
        <taxon>Sulfurimonadaceae</taxon>
        <taxon>Sulfurimonas</taxon>
    </lineage>
</organism>
<name>RL27_SULDN</name>
<dbReference type="EMBL" id="CP000153">
    <property type="protein sequence ID" value="ABB44692.1"/>
    <property type="molecule type" value="Genomic_DNA"/>
</dbReference>
<dbReference type="RefSeq" id="WP_011373044.1">
    <property type="nucleotide sequence ID" value="NC_007575.1"/>
</dbReference>
<dbReference type="SMR" id="Q30QN9"/>
<dbReference type="STRING" id="326298.Suden_1415"/>
<dbReference type="KEGG" id="tdn:Suden_1415"/>
<dbReference type="eggNOG" id="COG0211">
    <property type="taxonomic scope" value="Bacteria"/>
</dbReference>
<dbReference type="HOGENOM" id="CLU_095424_4_0_7"/>
<dbReference type="OrthoDB" id="9803474at2"/>
<dbReference type="Proteomes" id="UP000002714">
    <property type="component" value="Chromosome"/>
</dbReference>
<dbReference type="GO" id="GO:1990904">
    <property type="term" value="C:ribonucleoprotein complex"/>
    <property type="evidence" value="ECO:0007669"/>
    <property type="project" value="UniProtKB-KW"/>
</dbReference>
<dbReference type="GO" id="GO:0005840">
    <property type="term" value="C:ribosome"/>
    <property type="evidence" value="ECO:0007669"/>
    <property type="project" value="UniProtKB-KW"/>
</dbReference>
<dbReference type="GO" id="GO:0003735">
    <property type="term" value="F:structural constituent of ribosome"/>
    <property type="evidence" value="ECO:0007669"/>
    <property type="project" value="InterPro"/>
</dbReference>
<dbReference type="GO" id="GO:0006412">
    <property type="term" value="P:translation"/>
    <property type="evidence" value="ECO:0007669"/>
    <property type="project" value="UniProtKB-UniRule"/>
</dbReference>
<dbReference type="FunFam" id="2.40.50.100:FF:000004">
    <property type="entry name" value="50S ribosomal protein L27"/>
    <property type="match status" value="1"/>
</dbReference>
<dbReference type="Gene3D" id="2.40.50.100">
    <property type="match status" value="1"/>
</dbReference>
<dbReference type="HAMAP" id="MF_00539">
    <property type="entry name" value="Ribosomal_bL27"/>
    <property type="match status" value="1"/>
</dbReference>
<dbReference type="InterPro" id="IPR001684">
    <property type="entry name" value="Ribosomal_bL27"/>
</dbReference>
<dbReference type="InterPro" id="IPR018261">
    <property type="entry name" value="Ribosomal_bL27_CS"/>
</dbReference>
<dbReference type="NCBIfam" id="TIGR00062">
    <property type="entry name" value="L27"/>
    <property type="match status" value="1"/>
</dbReference>
<dbReference type="PANTHER" id="PTHR15893:SF0">
    <property type="entry name" value="LARGE RIBOSOMAL SUBUNIT PROTEIN BL27M"/>
    <property type="match status" value="1"/>
</dbReference>
<dbReference type="PANTHER" id="PTHR15893">
    <property type="entry name" value="RIBOSOMAL PROTEIN L27"/>
    <property type="match status" value="1"/>
</dbReference>
<dbReference type="Pfam" id="PF01016">
    <property type="entry name" value="Ribosomal_L27"/>
    <property type="match status" value="1"/>
</dbReference>
<dbReference type="PRINTS" id="PR00063">
    <property type="entry name" value="RIBOSOMALL27"/>
</dbReference>
<dbReference type="SUPFAM" id="SSF110324">
    <property type="entry name" value="Ribosomal L27 protein-like"/>
    <property type="match status" value="1"/>
</dbReference>
<dbReference type="PROSITE" id="PS00831">
    <property type="entry name" value="RIBOSOMAL_L27"/>
    <property type="match status" value="1"/>
</dbReference>
<sequence length="85" mass="9212">MAHKKGQGSTQNNRDSAGRRLGVKKYGGEVVIPGNIIIRQRGTKIHPGKNVGMGKDHTIFALVAGVVTFHRKDKKRQQVSIVPAA</sequence>
<comment type="similarity">
    <text evidence="1">Belongs to the bacterial ribosomal protein bL27 family.</text>
</comment>
<gene>
    <name evidence="1" type="primary">rpmA</name>
    <name type="ordered locus">Suden_1415</name>
</gene>